<reference key="1">
    <citation type="journal article" date="2002" name="Plant J.">
        <title>Identification of a novel gene HYS1/CPR5 that has a repressive role in the induction of leaf senescence and pathogen-defence responses in Arabidopsis thaliana.</title>
        <authorList>
            <person name="Yoshida S."/>
            <person name="Ito M."/>
            <person name="Nishida I."/>
            <person name="Watanabe A."/>
        </authorList>
    </citation>
    <scope>NUCLEOTIDE SEQUENCE [MRNA]</scope>
    <scope>FUNCTION</scope>
    <scope>TISSUE SPECIFICITY</scope>
    <scope>MUTAGENESIS OF PRO-535</scope>
    <source>
        <tissue>Leaf</tissue>
    </source>
</reference>
<reference key="2">
    <citation type="journal article" date="2000" name="DNA Res.">
        <title>Structural analysis of Arabidopsis thaliana chromosome 5. X. Sequence features of the regions of 3,076,755 bp covered by sixty P1 and TAC clones.</title>
        <authorList>
            <person name="Sato S."/>
            <person name="Nakamura Y."/>
            <person name="Kaneko T."/>
            <person name="Katoh T."/>
            <person name="Asamizu E."/>
            <person name="Kotani H."/>
            <person name="Tabata S."/>
        </authorList>
    </citation>
    <scope>NUCLEOTIDE SEQUENCE [LARGE SCALE GENOMIC DNA]</scope>
    <source>
        <strain>cv. Columbia</strain>
    </source>
</reference>
<reference key="3">
    <citation type="journal article" date="2017" name="Plant J.">
        <title>Araport11: a complete reannotation of the Arabidopsis thaliana reference genome.</title>
        <authorList>
            <person name="Cheng C.Y."/>
            <person name="Krishnakumar V."/>
            <person name="Chan A.P."/>
            <person name="Thibaud-Nissen F."/>
            <person name="Schobel S."/>
            <person name="Town C.D."/>
        </authorList>
    </citation>
    <scope>GENOME REANNOTATION</scope>
    <source>
        <strain>cv. Columbia</strain>
    </source>
</reference>
<reference key="4">
    <citation type="submission" date="2001-04" db="EMBL/GenBank/DDBJ databases">
        <title>Cloning of CPR5 (constitutive expresser of pathogenesis related genes), a novel regulator of disease resistance and senescence.</title>
        <authorList>
            <person name="Anderson L.K."/>
            <person name="Bowling S.A."/>
            <person name="Boch J."/>
            <person name="Clarke J.D.V."/>
            <person name="Kunkel B.N."/>
            <person name="Dong X."/>
        </authorList>
    </citation>
    <scope>NUCLEOTIDE SEQUENCE [MRNA]</scope>
    <source>
        <strain>cv. Columbia</strain>
    </source>
</reference>
<reference key="5">
    <citation type="journal article" date="1997" name="Plant Cell">
        <title>The cpr5 mutant of Arabidopsis expresses both NPR1-dependent and NPR1-independent resistance.</title>
        <authorList>
            <person name="Bowling S.A."/>
            <person name="Clarke J.D."/>
            <person name="Liu Y."/>
            <person name="Klessig D.F."/>
            <person name="Dong X."/>
        </authorList>
    </citation>
    <scope>FUNCTION</scope>
    <scope>DISRUPTION PHENOTYPE</scope>
</reference>
<reference key="6">
    <citation type="journal article" date="1998" name="Mol. Plant Microbe Interact.">
        <title>Analysis of resistance gene-mediated defense responses in Arabidopsis thaliana plants carrying a mutation in CPR5.</title>
        <authorList>
            <person name="Boch J."/>
            <person name="Verbsky M.L."/>
            <person name="Robertson T.L."/>
            <person name="Larkin J.C."/>
            <person name="Kunkel B.N."/>
        </authorList>
    </citation>
    <scope>FUNCTION</scope>
</reference>
<reference key="7">
    <citation type="journal article" date="2001" name="Curr. Biol.">
        <title>CPR5 is involved in cell proliferation and cell death control and encodes a novel transmembrane protein.</title>
        <authorList>
            <person name="Kirik V."/>
            <person name="Bouyer D."/>
            <person name="Schoebinger U."/>
            <person name="Bechtold N."/>
            <person name="Herzog M."/>
            <person name="Bonneville J.-M."/>
            <person name="Huelskamp M."/>
        </authorList>
    </citation>
    <scope>FUNCTION</scope>
</reference>
<reference key="8">
    <citation type="journal article" date="2011" name="Plant Physiol.">
        <title>GeBP/GPL transcription factors regulate a subset of CPR5-dependent processes.</title>
        <authorList>
            <person name="Perazza D."/>
            <person name="Laporte F."/>
            <person name="Balague C."/>
            <person name="Chevalier F."/>
            <person name="Remo S."/>
            <person name="Bourge M."/>
            <person name="Larkin J."/>
            <person name="Herzog M."/>
            <person name="Vachon G."/>
        </authorList>
    </citation>
    <scope>SUBCELLULAR LOCATION</scope>
    <scope>PROBABLE FUNCTION</scope>
</reference>
<reference key="9">
    <citation type="journal article" date="2014" name="Cell Host Microbe">
        <title>A noncanonical role for the CKI-RB-E2F cell-cycle signaling pathway in plant effector-triggered immunity.</title>
        <authorList>
            <person name="Wang S."/>
            <person name="Gu Y."/>
            <person name="Zebell S.G."/>
            <person name="Anderson L.K."/>
            <person name="Wang W."/>
            <person name="Mohan R."/>
            <person name="Dong X."/>
        </authorList>
    </citation>
    <scope>FUNCTION</scope>
    <scope>SUBCELLULAR LOCATION</scope>
    <scope>INTERACTION WITH SIM AND SMR1</scope>
</reference>
<comment type="function">
    <text evidence="3 4 6 7 8 11">May play a role in transcriptional processes (PubMed:21875893). Negatively regulates the senescence and chlorotic lesions induced by biotic (e.g. pathogens) and abiotic (e.g. sugars, darkness) agents, probably by controlling programmed cell death (pcd) (PubMed:11728314, PubMed:11846876, PubMed:9338960, Ref.6). Negative regulator of plant programmed cell death (PCD) and effector-triggered immunity (ETI) (PubMed:25455564). Promotes cell division and endoreduplication (e.g. in trichomes) (PubMed:11728314).</text>
</comment>
<comment type="subunit">
    <text evidence="6">Interacts with SIM and SMR1 (PubMed:25455564).</text>
</comment>
<comment type="subcellular location">
    <subcellularLocation>
        <location evidence="10">Membrane</location>
        <topology evidence="10">Multi-pass membrane protein</topology>
    </subcellularLocation>
    <subcellularLocation>
        <location evidence="5 6">Nucleus membrane</location>
    </subcellularLocation>
</comment>
<comment type="tissue specificity">
    <text evidence="4">Ubiquitous.</text>
</comment>
<comment type="disruption phenotype">
    <text evidence="7">Plants are more resistant to pathogens such as P.syringea and P.parasitica and develops spontaneous lesions.</text>
</comment>
<comment type="sequence caution" evidence="10">
    <conflict type="erroneous initiation">
        <sequence resource="EMBL-CDS" id="BAB79495"/>
    </conflict>
    <text>Truncated N-terminus.</text>
</comment>
<keyword id="KW-0472">Membrane</keyword>
<keyword id="KW-0539">Nucleus</keyword>
<keyword id="KW-1185">Reference proteome</keyword>
<keyword id="KW-0812">Transmembrane</keyword>
<keyword id="KW-1133">Transmembrane helix</keyword>
<dbReference type="EMBL" id="AB063329">
    <property type="protein sequence ID" value="BAB79495.1"/>
    <property type="status" value="ALT_INIT"/>
    <property type="molecule type" value="mRNA"/>
</dbReference>
<dbReference type="EMBL" id="AB019236">
    <property type="protein sequence ID" value="BAA97305.1"/>
    <property type="molecule type" value="Genomic_DNA"/>
</dbReference>
<dbReference type="EMBL" id="CP002688">
    <property type="protein sequence ID" value="AED97971.1"/>
    <property type="molecule type" value="Genomic_DNA"/>
</dbReference>
<dbReference type="EMBL" id="AY033229">
    <property type="protein sequence ID" value="AAK56393.1"/>
    <property type="molecule type" value="mRNA"/>
</dbReference>
<dbReference type="RefSeq" id="NP_569003.1">
    <property type="nucleotide sequence ID" value="NM_125892.4"/>
</dbReference>
<dbReference type="BioGRID" id="21859">
    <property type="interactions" value="3"/>
</dbReference>
<dbReference type="FunCoup" id="Q9LV85">
    <property type="interactions" value="1257"/>
</dbReference>
<dbReference type="STRING" id="3702.Q9LV85"/>
<dbReference type="TCDB" id="8.A.138.1.1">
    <property type="family name" value="the constitutive expresser of pathogenesis-related 5 (cpr5) family"/>
</dbReference>
<dbReference type="iPTMnet" id="Q9LV85"/>
<dbReference type="PaxDb" id="3702-AT5G64930.1"/>
<dbReference type="ProteomicsDB" id="220441"/>
<dbReference type="EnsemblPlants" id="AT5G64930.1">
    <property type="protein sequence ID" value="AT5G64930.1"/>
    <property type="gene ID" value="AT5G64930"/>
</dbReference>
<dbReference type="GeneID" id="836617"/>
<dbReference type="Gramene" id="AT5G64930.1">
    <property type="protein sequence ID" value="AT5G64930.1"/>
    <property type="gene ID" value="AT5G64930"/>
</dbReference>
<dbReference type="KEGG" id="ath:AT5G64930"/>
<dbReference type="Araport" id="AT5G64930"/>
<dbReference type="TAIR" id="AT5G64930">
    <property type="gene designation" value="CPR5"/>
</dbReference>
<dbReference type="eggNOG" id="ENOG502QU8R">
    <property type="taxonomic scope" value="Eukaryota"/>
</dbReference>
<dbReference type="HOGENOM" id="CLU_029740_2_0_1"/>
<dbReference type="InParanoid" id="Q9LV85"/>
<dbReference type="OMA" id="YWEVLCS"/>
<dbReference type="OrthoDB" id="2017423at2759"/>
<dbReference type="PhylomeDB" id="Q9LV85"/>
<dbReference type="PRO" id="PR:Q9LV85"/>
<dbReference type="Proteomes" id="UP000006548">
    <property type="component" value="Chromosome 5"/>
</dbReference>
<dbReference type="ExpressionAtlas" id="Q9LV85">
    <property type="expression patterns" value="baseline and differential"/>
</dbReference>
<dbReference type="GO" id="GO:0005783">
    <property type="term" value="C:endoplasmic reticulum"/>
    <property type="evidence" value="ECO:0000314"/>
    <property type="project" value="TAIR"/>
</dbReference>
<dbReference type="GO" id="GO:0016020">
    <property type="term" value="C:membrane"/>
    <property type="evidence" value="ECO:0000304"/>
    <property type="project" value="TAIR"/>
</dbReference>
<dbReference type="GO" id="GO:0005635">
    <property type="term" value="C:nuclear envelope"/>
    <property type="evidence" value="ECO:0000314"/>
    <property type="project" value="TAIR"/>
</dbReference>
<dbReference type="GO" id="GO:0031965">
    <property type="term" value="C:nuclear membrane"/>
    <property type="evidence" value="ECO:0007669"/>
    <property type="project" value="UniProtKB-SubCell"/>
</dbReference>
<dbReference type="GO" id="GO:0005634">
    <property type="term" value="C:nucleus"/>
    <property type="evidence" value="ECO:0000314"/>
    <property type="project" value="TAIR"/>
</dbReference>
<dbReference type="GO" id="GO:0006952">
    <property type="term" value="P:defense response"/>
    <property type="evidence" value="ECO:0000304"/>
    <property type="project" value="TAIR"/>
</dbReference>
<dbReference type="GO" id="GO:0010150">
    <property type="term" value="P:leaf senescence"/>
    <property type="evidence" value="ECO:0000315"/>
    <property type="project" value="TAIR"/>
</dbReference>
<dbReference type="GO" id="GO:0048573">
    <property type="term" value="P:photoperiodism, flowering"/>
    <property type="evidence" value="ECO:0000315"/>
    <property type="project" value="TAIR"/>
</dbReference>
<dbReference type="GO" id="GO:0009723">
    <property type="term" value="P:response to ethylene"/>
    <property type="evidence" value="ECO:0000315"/>
    <property type="project" value="TAIR"/>
</dbReference>
<dbReference type="GO" id="GO:0010182">
    <property type="term" value="P:sugar mediated signaling pathway"/>
    <property type="evidence" value="ECO:0000304"/>
    <property type="project" value="TAIR"/>
</dbReference>
<dbReference type="GO" id="GO:0009627">
    <property type="term" value="P:systemic acquired resistance"/>
    <property type="evidence" value="ECO:0000315"/>
    <property type="project" value="TAIR"/>
</dbReference>
<dbReference type="GO" id="GO:0010090">
    <property type="term" value="P:trichome morphogenesis"/>
    <property type="evidence" value="ECO:0000315"/>
    <property type="project" value="TAIR"/>
</dbReference>
<dbReference type="InterPro" id="IPR044708">
    <property type="entry name" value="CPR5"/>
</dbReference>
<dbReference type="PANTHER" id="PTHR35322">
    <property type="entry name" value="PROTEIN CPR-5"/>
    <property type="match status" value="1"/>
</dbReference>
<dbReference type="PANTHER" id="PTHR35322:SF2">
    <property type="entry name" value="PROTEIN CPR-5"/>
    <property type="match status" value="1"/>
</dbReference>
<name>CPR5_ARATH</name>
<feature type="chain" id="PRO_0000244568" description="Protein CPR-5">
    <location>
        <begin position="1"/>
        <end position="564"/>
    </location>
</feature>
<feature type="transmembrane region" description="Helical" evidence="1">
    <location>
        <begin position="347"/>
        <end position="367"/>
    </location>
</feature>
<feature type="transmembrane region" description="Helical" evidence="1">
    <location>
        <begin position="411"/>
        <end position="431"/>
    </location>
</feature>
<feature type="transmembrane region" description="Helical" evidence="1">
    <location>
        <begin position="443"/>
        <end position="463"/>
    </location>
</feature>
<feature type="transmembrane region" description="Helical" evidence="1">
    <location>
        <begin position="472"/>
        <end position="492"/>
    </location>
</feature>
<feature type="transmembrane region" description="Helical" evidence="1">
    <location>
        <begin position="526"/>
        <end position="546"/>
    </location>
</feature>
<feature type="region of interest" description="Disordered" evidence="2">
    <location>
        <begin position="1"/>
        <end position="87"/>
    </location>
</feature>
<feature type="compositionally biased region" description="Polar residues" evidence="2">
    <location>
        <begin position="12"/>
        <end position="28"/>
    </location>
</feature>
<feature type="compositionally biased region" description="Basic and acidic residues" evidence="2">
    <location>
        <begin position="29"/>
        <end position="38"/>
    </location>
</feature>
<feature type="compositionally biased region" description="Low complexity" evidence="2">
    <location>
        <begin position="69"/>
        <end position="84"/>
    </location>
</feature>
<feature type="mutagenesis site" description="In hys1-2; early senescence, enhanced chlorosis, hypersensitivity to sugars-mediated growth inhibition, and abnormal trichomes." evidence="4">
    <original>P</original>
    <variation>S</variation>
    <location>
        <position position="535"/>
    </location>
</feature>
<proteinExistence type="evidence at protein level"/>
<gene>
    <name evidence="9" type="primary">CPR5</name>
    <name evidence="9" type="synonym">HYS1</name>
    <name evidence="12" type="ordered locus">At5g64930</name>
    <name evidence="13" type="ORF">MXK3.16</name>
</gene>
<evidence type="ECO:0000255" key="1"/>
<evidence type="ECO:0000256" key="2">
    <source>
        <dbReference type="SAM" id="MobiDB-lite"/>
    </source>
</evidence>
<evidence type="ECO:0000269" key="3">
    <source>
    </source>
</evidence>
<evidence type="ECO:0000269" key="4">
    <source>
    </source>
</evidence>
<evidence type="ECO:0000269" key="5">
    <source>
    </source>
</evidence>
<evidence type="ECO:0000269" key="6">
    <source>
    </source>
</evidence>
<evidence type="ECO:0000269" key="7">
    <source>
    </source>
</evidence>
<evidence type="ECO:0000269" key="8">
    <source ref="6"/>
</evidence>
<evidence type="ECO:0000303" key="9">
    <source>
    </source>
</evidence>
<evidence type="ECO:0000305" key="10"/>
<evidence type="ECO:0000305" key="11">
    <source>
    </source>
</evidence>
<evidence type="ECO:0000312" key="12">
    <source>
        <dbReference type="Araport" id="AT5G64930"/>
    </source>
</evidence>
<evidence type="ECO:0000312" key="13">
    <source>
        <dbReference type="EMBL" id="BAA97305.1"/>
    </source>
</evidence>
<protein>
    <recommendedName>
        <fullName evidence="9">Protein CPR-5</fullName>
    </recommendedName>
    <alternativeName>
        <fullName evidence="9">Protein constitutive expression of pathogenesis-related genes 5</fullName>
        <shortName evidence="9">Protein constitutive expression of PR genes 5</shortName>
    </alternativeName>
    <alternativeName>
        <fullName evidence="9">Protein hypersenescence-1</fullName>
    </alternativeName>
</protein>
<accession>Q9LV85</accession>
<accession>Q8W3U8</accession>
<organism>
    <name type="scientific">Arabidopsis thaliana</name>
    <name type="common">Mouse-ear cress</name>
    <dbReference type="NCBI Taxonomy" id="3702"/>
    <lineage>
        <taxon>Eukaryota</taxon>
        <taxon>Viridiplantae</taxon>
        <taxon>Streptophyta</taxon>
        <taxon>Embryophyta</taxon>
        <taxon>Tracheophyta</taxon>
        <taxon>Spermatophyta</taxon>
        <taxon>Magnoliopsida</taxon>
        <taxon>eudicotyledons</taxon>
        <taxon>Gunneridae</taxon>
        <taxon>Pentapetalae</taxon>
        <taxon>rosids</taxon>
        <taxon>malvids</taxon>
        <taxon>Brassicales</taxon>
        <taxon>Brassicaceae</taxon>
        <taxon>Camelineae</taxon>
        <taxon>Arabidopsis</taxon>
    </lineage>
</organism>
<sequence length="564" mass="63112">MEALLLPPSPEPQNQITNPANSKPNHQSGDVHKDETMMMKKKKDTNPSNLEKRKLKGKKKEIMDNDEASSSYCSTSSTSNSNSTKRVTRVVHRLRNPMRLGMARRSVGERQAEKLAKPLGFSLAAFANMVIARKNAAGQNVYVDDLVEIFATLVEESLANVYGNKLGSFATNFEQTFSSTLKILKLTNECANPHQSNNNDGGSCNLDRSTIDGCSDTELFERETSSATSAYEVMQGSATATSLMNELALFEETLQLSCVPPRSSAMALTTDERFLKEQTRANDLKTVEIGLQIRELRCKETALGLKFESNNLGKAALELDVSKAAFRAEKFKTELEDTRKEEMVTRIMDWLLVSVFSMLASMVLGVYNFSIKRIEDATSVCDQSEEKSSSWWVPKQVSSINSGFNTFICRVRVWVQIFFGVLMIIVFTYFLNKRSSGTKQTMPISFIVLFLGIFCGVSGKLCVDTLGGDGKLWLIVWEVFCLLQFVANVFTLALYGLMFGPINVTQETRSNRCNSMFPYWARRSVVYVVILFVLPVINGLLPFATFGEWRDFAMYHLHGGSDYA</sequence>